<organism>
    <name type="scientific">Arabidopsis thaliana</name>
    <name type="common">Mouse-ear cress</name>
    <dbReference type="NCBI Taxonomy" id="3702"/>
    <lineage>
        <taxon>Eukaryota</taxon>
        <taxon>Viridiplantae</taxon>
        <taxon>Streptophyta</taxon>
        <taxon>Embryophyta</taxon>
        <taxon>Tracheophyta</taxon>
        <taxon>Spermatophyta</taxon>
        <taxon>Magnoliopsida</taxon>
        <taxon>eudicotyledons</taxon>
        <taxon>Gunneridae</taxon>
        <taxon>Pentapetalae</taxon>
        <taxon>rosids</taxon>
        <taxon>malvids</taxon>
        <taxon>Brassicales</taxon>
        <taxon>Brassicaceae</taxon>
        <taxon>Camelineae</taxon>
        <taxon>Arabidopsis</taxon>
    </lineage>
</organism>
<gene>
    <name type="primary">RSZ21</name>
    <name type="synonym">RSZP21</name>
    <name type="synonym">SRZ21</name>
    <name type="ordered locus">At1g23860</name>
    <name type="ORF">T23E23.2</name>
</gene>
<evidence type="ECO:0000250" key="1"/>
<evidence type="ECO:0000250" key="2">
    <source>
        <dbReference type="UniProtKB" id="P92964"/>
    </source>
</evidence>
<evidence type="ECO:0000250" key="3">
    <source>
        <dbReference type="UniProtKB" id="P92966"/>
    </source>
</evidence>
<evidence type="ECO:0000250" key="4">
    <source>
        <dbReference type="UniProtKB" id="Q8VYA5"/>
    </source>
</evidence>
<evidence type="ECO:0000250" key="5">
    <source>
        <dbReference type="UniProtKB" id="Q9FYB7"/>
    </source>
</evidence>
<evidence type="ECO:0000250" key="6">
    <source>
        <dbReference type="UniProtKB" id="Q9SJA6"/>
    </source>
</evidence>
<evidence type="ECO:0000255" key="7">
    <source>
        <dbReference type="PROSITE-ProRule" id="PRU00047"/>
    </source>
</evidence>
<evidence type="ECO:0000255" key="8">
    <source>
        <dbReference type="PROSITE-ProRule" id="PRU00176"/>
    </source>
</evidence>
<evidence type="ECO:0000256" key="9">
    <source>
        <dbReference type="SAM" id="MobiDB-lite"/>
    </source>
</evidence>
<evidence type="ECO:0000269" key="10">
    <source>
    </source>
</evidence>
<evidence type="ECO:0000269" key="11">
    <source>
    </source>
</evidence>
<evidence type="ECO:0000269" key="12">
    <source>
    </source>
</evidence>
<evidence type="ECO:0000269" key="13">
    <source>
    </source>
</evidence>
<evidence type="ECO:0000269" key="14">
    <source>
    </source>
</evidence>
<evidence type="ECO:0000269" key="15">
    <source>
    </source>
</evidence>
<evidence type="ECO:0000269" key="16">
    <source>
    </source>
</evidence>
<evidence type="ECO:0000269" key="17">
    <source>
    </source>
</evidence>
<evidence type="ECO:0000305" key="18"/>
<evidence type="ECO:0007744" key="19">
    <source>
    </source>
</evidence>
<reference key="1">
    <citation type="journal article" date="1998" name="Plant Cell">
        <title>The plant U1 small nuclear ribonucleoprotein particle 70K protein interacts with two novel serine/arginine-rich proteins.</title>
        <authorList>
            <person name="Golovkin M."/>
            <person name="Reddy A.S."/>
        </authorList>
    </citation>
    <scope>NUCLEOTIDE SEQUENCE [MRNA] (ISOFORM 1)</scope>
    <scope>INTERACTION WITH RNU1</scope>
    <scope>TISSUE SPECIFICITY</scope>
</reference>
<reference key="2">
    <citation type="journal article" date="1999" name="Plant Mol. Biol.">
        <title>A novel family of plant splicing factors with a Zn knuckle motif: examination of RNA binding and splicing activities.</title>
        <authorList>
            <person name="Lopato S."/>
            <person name="Gattoni R."/>
            <person name="Fabini G."/>
            <person name="Stevenin J."/>
            <person name="Barta A."/>
        </authorList>
    </citation>
    <scope>NUCLEOTIDE SEQUENCE [MRNA] (ISOFORM 1)</scope>
    <source>
        <strain>cv. Columbia</strain>
    </source>
</reference>
<reference key="3">
    <citation type="journal article" date="2000" name="Nature">
        <title>Sequence and analysis of chromosome 1 of the plant Arabidopsis thaliana.</title>
        <authorList>
            <person name="Theologis A."/>
            <person name="Ecker J.R."/>
            <person name="Palm C.J."/>
            <person name="Federspiel N.A."/>
            <person name="Kaul S."/>
            <person name="White O."/>
            <person name="Alonso J."/>
            <person name="Altafi H."/>
            <person name="Araujo R."/>
            <person name="Bowman C.L."/>
            <person name="Brooks S.Y."/>
            <person name="Buehler E."/>
            <person name="Chan A."/>
            <person name="Chao Q."/>
            <person name="Chen H."/>
            <person name="Cheuk R.F."/>
            <person name="Chin C.W."/>
            <person name="Chung M.K."/>
            <person name="Conn L."/>
            <person name="Conway A.B."/>
            <person name="Conway A.R."/>
            <person name="Creasy T.H."/>
            <person name="Dewar K."/>
            <person name="Dunn P."/>
            <person name="Etgu P."/>
            <person name="Feldblyum T.V."/>
            <person name="Feng J.-D."/>
            <person name="Fong B."/>
            <person name="Fujii C.Y."/>
            <person name="Gill J.E."/>
            <person name="Goldsmith A.D."/>
            <person name="Haas B."/>
            <person name="Hansen N.F."/>
            <person name="Hughes B."/>
            <person name="Huizar L."/>
            <person name="Hunter J.L."/>
            <person name="Jenkins J."/>
            <person name="Johnson-Hopson C."/>
            <person name="Khan S."/>
            <person name="Khaykin E."/>
            <person name="Kim C.J."/>
            <person name="Koo H.L."/>
            <person name="Kremenetskaia I."/>
            <person name="Kurtz D.B."/>
            <person name="Kwan A."/>
            <person name="Lam B."/>
            <person name="Langin-Hooper S."/>
            <person name="Lee A."/>
            <person name="Lee J.M."/>
            <person name="Lenz C.A."/>
            <person name="Li J.H."/>
            <person name="Li Y.-P."/>
            <person name="Lin X."/>
            <person name="Liu S.X."/>
            <person name="Liu Z.A."/>
            <person name="Luros J.S."/>
            <person name="Maiti R."/>
            <person name="Marziali A."/>
            <person name="Militscher J."/>
            <person name="Miranda M."/>
            <person name="Nguyen M."/>
            <person name="Nierman W.C."/>
            <person name="Osborne B.I."/>
            <person name="Pai G."/>
            <person name="Peterson J."/>
            <person name="Pham P.K."/>
            <person name="Rizzo M."/>
            <person name="Rooney T."/>
            <person name="Rowley D."/>
            <person name="Sakano H."/>
            <person name="Salzberg S.L."/>
            <person name="Schwartz J.R."/>
            <person name="Shinn P."/>
            <person name="Southwick A.M."/>
            <person name="Sun H."/>
            <person name="Tallon L.J."/>
            <person name="Tambunga G."/>
            <person name="Toriumi M.J."/>
            <person name="Town C.D."/>
            <person name="Utterback T."/>
            <person name="Van Aken S."/>
            <person name="Vaysberg M."/>
            <person name="Vysotskaia V.S."/>
            <person name="Walker M."/>
            <person name="Wu D."/>
            <person name="Yu G."/>
            <person name="Fraser C.M."/>
            <person name="Venter J.C."/>
            <person name="Davis R.W."/>
        </authorList>
    </citation>
    <scope>NUCLEOTIDE SEQUENCE [LARGE SCALE GENOMIC DNA]</scope>
    <source>
        <strain>cv. Columbia</strain>
    </source>
</reference>
<reference key="4">
    <citation type="journal article" date="2017" name="Plant J.">
        <title>Araport11: a complete reannotation of the Arabidopsis thaliana reference genome.</title>
        <authorList>
            <person name="Cheng C.Y."/>
            <person name="Krishnakumar V."/>
            <person name="Chan A.P."/>
            <person name="Thibaud-Nissen F."/>
            <person name="Schobel S."/>
            <person name="Town C.D."/>
        </authorList>
    </citation>
    <scope>GENOME REANNOTATION</scope>
    <source>
        <strain>cv. Columbia</strain>
    </source>
</reference>
<reference key="5">
    <citation type="journal article" date="2009" name="DNA Res.">
        <title>Analysis of multiple occurrences of alternative splicing events in Arabidopsis thaliana using novel sequenced full-length cDNAs.</title>
        <authorList>
            <person name="Iida K."/>
            <person name="Fukami-Kobayashi K."/>
            <person name="Toyoda A."/>
            <person name="Sakaki Y."/>
            <person name="Kobayashi M."/>
            <person name="Seki M."/>
            <person name="Shinozaki K."/>
        </authorList>
    </citation>
    <scope>NUCLEOTIDE SEQUENCE [LARGE SCALE MRNA] (ISOFORM 1)</scope>
    <source>
        <strain>cv. Columbia</strain>
    </source>
</reference>
<reference key="6">
    <citation type="journal article" date="1999" name="J. Biol. Chem.">
        <title>An SC35-like protein and a novel serine/arginine-rich protein interact with Arabidopsis U1-70K protein.</title>
        <authorList>
            <person name="Golovkin M."/>
            <person name="Reddy A.S.N."/>
        </authorList>
    </citation>
    <scope>INTERACTION WITH AFC2</scope>
</reference>
<reference key="7">
    <citation type="journal article" date="2002" name="J. Biol. Chem.">
        <title>Network of interactions of a novel plant-specific Arg/Ser-rich protein, atRSZ33, with atSC35-like splicing factors.</title>
        <authorList>
            <person name="Lopato S."/>
            <person name="Forstner C."/>
            <person name="Kalyna M."/>
            <person name="Hilscher J."/>
            <person name="Langhammer U."/>
            <person name="Korakod L."/>
            <person name="Zdravko J."/>
            <person name="Barta A."/>
        </authorList>
    </citation>
    <scope>INTERACTION WITH RS2Z33</scope>
</reference>
<reference key="8">
    <citation type="journal article" date="2004" name="Mol. Biol. Cell">
        <title>Use of fluorescent protein tags to study nuclear organization of the spliceosomal machinery in transiently transformed living plant cells.</title>
        <authorList>
            <person name="Lorkovic Z.J."/>
            <person name="Hilscher J."/>
            <person name="Barta A."/>
        </authorList>
    </citation>
    <scope>SUBCELLULAR LOCATION</scope>
</reference>
<reference key="9">
    <citation type="journal article" date="2005" name="RNA">
        <title>Evolutionary conservation of minor U12-type spliceosome between plants and humans.</title>
        <authorList>
            <person name="Lorkovic Z.J."/>
            <person name="Lehner R."/>
            <person name="Forstner C."/>
            <person name="Barta A."/>
        </authorList>
    </citation>
    <scope>INTERACTION WITH SNRNP35</scope>
</reference>
<reference key="10">
    <citation type="journal article" date="2006" name="RNA">
        <title>AtCyp59 is a multidomain cyclophilin from Arabidopsis thaliana that interacts with SR proteins and the C-terminal domain of the RNA polymerase II.</title>
        <authorList>
            <person name="Gullerova M."/>
            <person name="Barta A."/>
            <person name="Lorkovic Z.J."/>
        </authorList>
    </citation>
    <scope>INTERACTION WITH CYP59</scope>
</reference>
<reference key="11">
    <citation type="journal article" date="2008" name="Exp. Cell Res.">
        <title>Co-localisation studies of Arabidopsis SR splicing factors reveal different types of speckles in plant cell nuclei.</title>
        <authorList>
            <person name="Lorkovic Z.J."/>
            <person name="Hilscher J."/>
            <person name="Barta A."/>
        </authorList>
    </citation>
    <scope>SUBCELLULAR LOCATION</scope>
</reference>
<reference key="12">
    <citation type="journal article" date="2009" name="Plant Physiol.">
        <title>Large-scale Arabidopsis phosphoproteome profiling reveals novel chloroplast kinase substrates and phosphorylation networks.</title>
        <authorList>
            <person name="Reiland S."/>
            <person name="Messerli G."/>
            <person name="Baerenfaller K."/>
            <person name="Gerrits B."/>
            <person name="Endler A."/>
            <person name="Grossmann J."/>
            <person name="Gruissem W."/>
            <person name="Baginsky S."/>
        </authorList>
    </citation>
    <scope>PHOSPHORYLATION [LARGE SCALE ANALYSIS] AT SER-123</scope>
    <scope>IDENTIFICATION BY MASS SPECTROMETRY [LARGE SCALE ANALYSIS]</scope>
</reference>
<reference key="13">
    <citation type="journal article" date="2010" name="Plant Cell">
        <title>Implementing a rational and consistent nomenclature for serine/arginine-rich protein splicing factors (SR proteins) in plants.</title>
        <authorList>
            <person name="Barta A."/>
            <person name="Kalyna M."/>
            <person name="Reddy A.S."/>
        </authorList>
    </citation>
    <scope>GENE FAMILY</scope>
    <scope>NOMENCLATURE</scope>
</reference>
<reference key="14">
    <citation type="journal article" date="2011" name="PLoS Genet.">
        <title>Transportin-SR is required for proper splicing of resistance genes and plant immunity.</title>
        <authorList>
            <person name="Xu S."/>
            <person name="Zhang Z."/>
            <person name="Jing B."/>
            <person name="Gannon P."/>
            <person name="Ding J."/>
            <person name="Xu F."/>
            <person name="Li X."/>
            <person name="Zhang Y."/>
        </authorList>
    </citation>
    <scope>INTERACTION WITH MOS14</scope>
</reference>
<reference key="15">
    <citation type="journal article" date="2011" name="PLoS ONE">
        <title>Comparative analysis of serine/arginine-rich proteins across 27 eukaryotes: insights into sub-family classification and extent of alternative splicing.</title>
        <authorList>
            <person name="Richardson D.N."/>
            <person name="Rogers M.F."/>
            <person name="Labadorf A."/>
            <person name="Ben-Hur A."/>
            <person name="Guo H."/>
            <person name="Paterson A.H."/>
            <person name="Reddy A.S.N."/>
        </authorList>
    </citation>
    <scope>GENE FAMILY</scope>
</reference>
<protein>
    <recommendedName>
        <fullName>Serine/arginine-rich splicing factor RSZ21</fullName>
    </recommendedName>
    <alternativeName>
        <fullName>RS-containing zinc finger protein 21</fullName>
        <shortName>At-RSZ21</shortName>
        <shortName>At-RSZp21</shortName>
        <shortName>AtRSZ21</shortName>
    </alternativeName>
</protein>
<name>RSZ21_ARATH</name>
<keyword id="KW-0025">Alternative splicing</keyword>
<keyword id="KW-0479">Metal-binding</keyword>
<keyword id="KW-0507">mRNA processing</keyword>
<keyword id="KW-0508">mRNA splicing</keyword>
<keyword id="KW-0539">Nucleus</keyword>
<keyword id="KW-0597">Phosphoprotein</keyword>
<keyword id="KW-1185">Reference proteome</keyword>
<keyword id="KW-0747">Spliceosome</keyword>
<keyword id="KW-0862">Zinc</keyword>
<keyword id="KW-0863">Zinc-finger</keyword>
<dbReference type="EMBL" id="AF033587">
    <property type="protein sequence ID" value="AAD12770.1"/>
    <property type="molecule type" value="mRNA"/>
</dbReference>
<dbReference type="EMBL" id="AJ002377">
    <property type="protein sequence ID" value="CAA05351.1"/>
    <property type="molecule type" value="mRNA"/>
</dbReference>
<dbReference type="EMBL" id="AC002423">
    <property type="protein sequence ID" value="AAF87159.1"/>
    <property type="status" value="ALT_SEQ"/>
    <property type="molecule type" value="Genomic_DNA"/>
</dbReference>
<dbReference type="EMBL" id="CP002684">
    <property type="protein sequence ID" value="AEE30440.1"/>
    <property type="molecule type" value="Genomic_DNA"/>
</dbReference>
<dbReference type="EMBL" id="CP002684">
    <property type="protein sequence ID" value="AEE30441.1"/>
    <property type="molecule type" value="Genomic_DNA"/>
</dbReference>
<dbReference type="EMBL" id="CP002684">
    <property type="protein sequence ID" value="AEE30442.1"/>
    <property type="molecule type" value="Genomic_DNA"/>
</dbReference>
<dbReference type="EMBL" id="CP002684">
    <property type="protein sequence ID" value="AEE30443.1"/>
    <property type="molecule type" value="Genomic_DNA"/>
</dbReference>
<dbReference type="EMBL" id="AK317576">
    <property type="protein sequence ID" value="BAH20240.1"/>
    <property type="molecule type" value="mRNA"/>
</dbReference>
<dbReference type="PIR" id="A86373">
    <property type="entry name" value="A86373"/>
</dbReference>
<dbReference type="PIR" id="T51584">
    <property type="entry name" value="T51584"/>
</dbReference>
<dbReference type="PIR" id="T52628">
    <property type="entry name" value="T52628"/>
</dbReference>
<dbReference type="RefSeq" id="NP_001117342.1">
    <molecule id="O81127-3"/>
    <property type="nucleotide sequence ID" value="NM_001123870.4"/>
</dbReference>
<dbReference type="RefSeq" id="NP_001185074.1">
    <molecule id="O81127-2"/>
    <property type="nucleotide sequence ID" value="NM_001198145.1"/>
</dbReference>
<dbReference type="RefSeq" id="NP_564208.1">
    <molecule id="O81127-1"/>
    <property type="nucleotide sequence ID" value="NM_102234.4"/>
</dbReference>
<dbReference type="RefSeq" id="NP_973901.1">
    <molecule id="O81127-1"/>
    <property type="nucleotide sequence ID" value="NM_202172.1"/>
</dbReference>
<dbReference type="SMR" id="O81127"/>
<dbReference type="BioGRID" id="24235">
    <property type="interactions" value="23"/>
</dbReference>
<dbReference type="FunCoup" id="O81127">
    <property type="interactions" value="3691"/>
</dbReference>
<dbReference type="IntAct" id="O81127">
    <property type="interactions" value="16"/>
</dbReference>
<dbReference type="STRING" id="3702.O81127"/>
<dbReference type="GlyGen" id="O81127">
    <property type="glycosylation" value="1 site"/>
</dbReference>
<dbReference type="iPTMnet" id="O81127"/>
<dbReference type="PaxDb" id="3702-AT1G23860.1"/>
<dbReference type="ProteomicsDB" id="228056">
    <molecule id="O81127-1"/>
</dbReference>
<dbReference type="EnsemblPlants" id="AT1G23860.1">
    <molecule id="O81127-1"/>
    <property type="protein sequence ID" value="AT1G23860.1"/>
    <property type="gene ID" value="AT1G23860"/>
</dbReference>
<dbReference type="EnsemblPlants" id="AT1G23860.2">
    <molecule id="O81127-1"/>
    <property type="protein sequence ID" value="AT1G23860.2"/>
    <property type="gene ID" value="AT1G23860"/>
</dbReference>
<dbReference type="EnsemblPlants" id="AT1G23860.3">
    <molecule id="O81127-3"/>
    <property type="protein sequence ID" value="AT1G23860.3"/>
    <property type="gene ID" value="AT1G23860"/>
</dbReference>
<dbReference type="EnsemblPlants" id="AT1G23860.4">
    <molecule id="O81127-2"/>
    <property type="protein sequence ID" value="AT1G23860.4"/>
    <property type="gene ID" value="AT1G23860"/>
</dbReference>
<dbReference type="GeneID" id="838997"/>
<dbReference type="Gramene" id="AT1G23860.1">
    <molecule id="O81127-1"/>
    <property type="protein sequence ID" value="AT1G23860.1"/>
    <property type="gene ID" value="AT1G23860"/>
</dbReference>
<dbReference type="Gramene" id="AT1G23860.2">
    <molecule id="O81127-1"/>
    <property type="protein sequence ID" value="AT1G23860.2"/>
    <property type="gene ID" value="AT1G23860"/>
</dbReference>
<dbReference type="Gramene" id="AT1G23860.3">
    <molecule id="O81127-3"/>
    <property type="protein sequence ID" value="AT1G23860.3"/>
    <property type="gene ID" value="AT1G23860"/>
</dbReference>
<dbReference type="Gramene" id="AT1G23860.4">
    <molecule id="O81127-2"/>
    <property type="protein sequence ID" value="AT1G23860.4"/>
    <property type="gene ID" value="AT1G23860"/>
</dbReference>
<dbReference type="KEGG" id="ath:AT1G23860"/>
<dbReference type="Araport" id="AT1G23860"/>
<dbReference type="TAIR" id="AT1G23860">
    <property type="gene designation" value="RSZ21"/>
</dbReference>
<dbReference type="eggNOG" id="KOG0107">
    <property type="taxonomic scope" value="Eukaryota"/>
</dbReference>
<dbReference type="InParanoid" id="O81127"/>
<dbReference type="OMA" id="IMHRDCP"/>
<dbReference type="OrthoDB" id="5970at2759"/>
<dbReference type="PhylomeDB" id="O81127"/>
<dbReference type="PRO" id="PR:O81127"/>
<dbReference type="Proteomes" id="UP000006548">
    <property type="component" value="Chromosome 1"/>
</dbReference>
<dbReference type="ExpressionAtlas" id="O81127">
    <property type="expression patterns" value="baseline and differential"/>
</dbReference>
<dbReference type="GO" id="GO:0016607">
    <property type="term" value="C:nuclear speck"/>
    <property type="evidence" value="ECO:0000314"/>
    <property type="project" value="TAIR"/>
</dbReference>
<dbReference type="GO" id="GO:0005681">
    <property type="term" value="C:spliceosomal complex"/>
    <property type="evidence" value="ECO:0007669"/>
    <property type="project" value="UniProtKB-KW"/>
</dbReference>
<dbReference type="GO" id="GO:0042802">
    <property type="term" value="F:identical protein binding"/>
    <property type="evidence" value="ECO:0000353"/>
    <property type="project" value="IntAct"/>
</dbReference>
<dbReference type="GO" id="GO:0003729">
    <property type="term" value="F:mRNA binding"/>
    <property type="evidence" value="ECO:0000314"/>
    <property type="project" value="TAIR"/>
</dbReference>
<dbReference type="GO" id="GO:0008270">
    <property type="term" value="F:zinc ion binding"/>
    <property type="evidence" value="ECO:0007669"/>
    <property type="project" value="UniProtKB-KW"/>
</dbReference>
<dbReference type="GO" id="GO:0000398">
    <property type="term" value="P:mRNA splicing, via spliceosome"/>
    <property type="evidence" value="ECO:0000304"/>
    <property type="project" value="TAIR"/>
</dbReference>
<dbReference type="CDD" id="cd12373">
    <property type="entry name" value="RRM_SRSF3_like"/>
    <property type="match status" value="1"/>
</dbReference>
<dbReference type="FunFam" id="3.30.70.330:FF:000214">
    <property type="entry name" value="Serine/arginine-rich splicing factor 7"/>
    <property type="match status" value="1"/>
</dbReference>
<dbReference type="Gene3D" id="3.30.70.330">
    <property type="match status" value="1"/>
</dbReference>
<dbReference type="Gene3D" id="4.10.60.10">
    <property type="entry name" value="Zinc finger, CCHC-type"/>
    <property type="match status" value="1"/>
</dbReference>
<dbReference type="InterPro" id="IPR012677">
    <property type="entry name" value="Nucleotide-bd_a/b_plait_sf"/>
</dbReference>
<dbReference type="InterPro" id="IPR035979">
    <property type="entry name" value="RBD_domain_sf"/>
</dbReference>
<dbReference type="InterPro" id="IPR000504">
    <property type="entry name" value="RRM_dom"/>
</dbReference>
<dbReference type="InterPro" id="IPR050907">
    <property type="entry name" value="SRSF"/>
</dbReference>
<dbReference type="InterPro" id="IPR001878">
    <property type="entry name" value="Znf_CCHC"/>
</dbReference>
<dbReference type="InterPro" id="IPR036875">
    <property type="entry name" value="Znf_CCHC_sf"/>
</dbReference>
<dbReference type="PANTHER" id="PTHR23147">
    <property type="entry name" value="SERINE/ARGININE RICH SPLICING FACTOR"/>
    <property type="match status" value="1"/>
</dbReference>
<dbReference type="Pfam" id="PF00076">
    <property type="entry name" value="RRM_1"/>
    <property type="match status" value="1"/>
</dbReference>
<dbReference type="Pfam" id="PF00098">
    <property type="entry name" value="zf-CCHC"/>
    <property type="match status" value="1"/>
</dbReference>
<dbReference type="SMART" id="SM00360">
    <property type="entry name" value="RRM"/>
    <property type="match status" value="1"/>
</dbReference>
<dbReference type="SMART" id="SM00343">
    <property type="entry name" value="ZnF_C2HC"/>
    <property type="match status" value="1"/>
</dbReference>
<dbReference type="SUPFAM" id="SSF57756">
    <property type="entry name" value="Retrovirus zinc finger-like domains"/>
    <property type="match status" value="1"/>
</dbReference>
<dbReference type="SUPFAM" id="SSF54928">
    <property type="entry name" value="RNA-binding domain, RBD"/>
    <property type="match status" value="1"/>
</dbReference>
<dbReference type="PROSITE" id="PS50102">
    <property type="entry name" value="RRM"/>
    <property type="match status" value="1"/>
</dbReference>
<dbReference type="PROSITE" id="PS50158">
    <property type="entry name" value="ZF_CCHC"/>
    <property type="match status" value="1"/>
</dbReference>
<accession>O81127</accession>
<accession>B3H6W9</accession>
<accession>F4I7M9</accession>
<accession>O23645</accession>
<accession>Q9LRA8</accession>
<feature type="chain" id="PRO_0000416991" description="Serine/arginine-rich splicing factor RSZ21">
    <location>
        <begin position="1"/>
        <end position="187"/>
    </location>
</feature>
<feature type="domain" description="RRM" evidence="8">
    <location>
        <begin position="2"/>
        <end position="73"/>
    </location>
</feature>
<feature type="zinc finger region" description="CCHC-type" evidence="7">
    <location>
        <begin position="89"/>
        <end position="106"/>
    </location>
</feature>
<feature type="region of interest" description="Disordered" evidence="9">
    <location>
        <begin position="68"/>
        <end position="89"/>
    </location>
</feature>
<feature type="region of interest" description="Disordered" evidence="9">
    <location>
        <begin position="105"/>
        <end position="187"/>
    </location>
</feature>
<feature type="compositionally biased region" description="Basic residues" evidence="9">
    <location>
        <begin position="107"/>
        <end position="122"/>
    </location>
</feature>
<feature type="compositionally biased region" description="Basic residues" evidence="9">
    <location>
        <begin position="136"/>
        <end position="155"/>
    </location>
</feature>
<feature type="compositionally biased region" description="Basic and acidic residues" evidence="9">
    <location>
        <begin position="165"/>
        <end position="177"/>
    </location>
</feature>
<feature type="compositionally biased region" description="Low complexity" evidence="9">
    <location>
        <begin position="178"/>
        <end position="187"/>
    </location>
</feature>
<feature type="modified residue" description="Phosphoserine" evidence="19">
    <location>
        <position position="123"/>
    </location>
</feature>
<feature type="modified residue" description="Phosphoserine" evidence="4">
    <location>
        <position position="132"/>
    </location>
</feature>
<feature type="modified residue" description="Phosphoserine" evidence="4">
    <location>
        <position position="134"/>
    </location>
</feature>
<feature type="modified residue" description="Phosphoserine" evidence="2">
    <location>
        <position position="140"/>
    </location>
</feature>
<feature type="modified residue" description="Phosphoserine" evidence="3">
    <location>
        <position position="146"/>
    </location>
</feature>
<feature type="modified residue" description="Phosphoserine" evidence="6">
    <location>
        <position position="159"/>
    </location>
</feature>
<feature type="modified residue" description="Phosphoserine" evidence="5">
    <location>
        <position position="181"/>
    </location>
</feature>
<feature type="splice variant" id="VSP_054986" description="In isoform 2." evidence="18">
    <location>
        <begin position="128"/>
        <end position="131"/>
    </location>
</feature>
<feature type="splice variant" id="VSP_054987" description="In isoform 3." evidence="18">
    <location>
        <begin position="131"/>
        <end position="153"/>
    </location>
</feature>
<feature type="sequence conflict" description="In Ref. 2; CAA05351." evidence="18" ref="2">
    <original>R</original>
    <variation>S</variation>
    <location>
        <position position="136"/>
    </location>
</feature>
<feature type="sequence conflict" description="In Ref. 2; CAA05351." evidence="18" ref="2">
    <location>
        <begin position="153"/>
        <end position="155"/>
    </location>
</feature>
<comment type="function">
    <text>Probably involved in intron recognition and spliceosome assembly.</text>
</comment>
<comment type="subunit">
    <text evidence="10 11 13 14 16 17">Component of the spliceosome. Interacts with SNRNP35, AFC2, CYP59, RS2Z33 and RNU1 (PubMed:10593939, PubMed:12176998, PubMed:15987817, PubMed:16497658, PubMed:9761791). Interacts with MOS14 (PubMed:21738492).</text>
</comment>
<comment type="interaction">
    <interactant intactId="EBI-927172">
        <id>O81127</id>
    </interactant>
    <interactant intactId="EBI-25519318">
        <id>P51568</id>
        <label>AFC3</label>
    </interactant>
    <organismsDiffer>false</organismsDiffer>
    <experiments>3</experiments>
</comment>
<comment type="interaction">
    <interactant intactId="EBI-927172">
        <id>O81127</id>
    </interactant>
    <interactant intactId="EBI-1100737">
        <id>Q8L9Y3</id>
        <label>ARR14</label>
    </interactant>
    <organismsDiffer>false</organismsDiffer>
    <experiments>3</experiments>
</comment>
<comment type="interaction">
    <interactant intactId="EBI-927172">
        <id>O81127</id>
    </interactant>
    <interactant intactId="EBI-4449084">
        <id>Q9FIU6</id>
        <label>ORRM2</label>
    </interactant>
    <organismsDiffer>false</organismsDiffer>
    <experiments>3</experiments>
</comment>
<comment type="interaction">
    <interactant intactId="EBI-927172">
        <id>O81127</id>
    </interactant>
    <interactant intactId="EBI-1633812">
        <id>Q42404</id>
        <label>RNU1</label>
    </interactant>
    <organismsDiffer>false</organismsDiffer>
    <experiments>4</experiments>
</comment>
<comment type="interaction">
    <interactant intactId="EBI-927172">
        <id>O81127</id>
    </interactant>
    <interactant intactId="EBI-927132">
        <id>P92964</id>
        <label>RS31</label>
    </interactant>
    <organismsDiffer>false</organismsDiffer>
    <experiments>5</experiments>
</comment>
<comment type="interaction">
    <interactant intactId="EBI-927172">
        <id>O81127</id>
    </interactant>
    <interactant intactId="EBI-4474477">
        <id>P92966</id>
        <label>RS41</label>
    </interactant>
    <organismsDiffer>false</organismsDiffer>
    <experiments>3</experiments>
</comment>
<comment type="interaction">
    <interactant intactId="EBI-927172">
        <id>O81127</id>
    </interactant>
    <interactant intactId="EBI-927172">
        <id>O81127</id>
        <label>RSZ21</label>
    </interactant>
    <organismsDiffer>false</organismsDiffer>
    <experiments>3</experiments>
</comment>
<comment type="interaction">
    <interactant intactId="EBI-927172">
        <id>O81127</id>
    </interactant>
    <interactant intactId="EBI-4433459">
        <id>Q9SJA6</id>
        <label>RSZ22A</label>
    </interactant>
    <organismsDiffer>false</organismsDiffer>
    <experiments>3</experiments>
</comment>
<comment type="subcellular location">
    <subcellularLocation>
        <location evidence="12 15">Nucleus speckle</location>
    </subcellularLocation>
</comment>
<comment type="alternative products">
    <event type="alternative splicing"/>
    <isoform>
        <id>O81127-1</id>
        <name>1</name>
        <sequence type="displayed"/>
    </isoform>
    <isoform>
        <id>O81127-2</id>
        <name>2</name>
        <sequence type="described" ref="VSP_054986"/>
    </isoform>
    <isoform>
        <id>O81127-3</id>
        <name>3</name>
        <sequence type="described" ref="VSP_054987"/>
    </isoform>
    <text>A number of isoforms are produced. According to EST sequences.</text>
</comment>
<comment type="tissue specificity">
    <text evidence="17">Expressed in roots, leaves, flowers and siliques.</text>
</comment>
<comment type="PTM">
    <text evidence="1">Extensively phosphorylated on serine residues in the RS domain (By similarity). Phosphorylated by AFC2.</text>
</comment>
<comment type="similarity">
    <text evidence="18">Belongs to the splicing factor SR family. RSZ subfamily.</text>
</comment>
<comment type="sequence caution" evidence="18">
    <conflict type="erroneous gene model prediction">
        <sequence resource="EMBL-CDS" id="AAF87159"/>
    </conflict>
</comment>
<proteinExistence type="evidence at protein level"/>
<sequence>MTRVYVGNLDPRVTERELEDEFKAFGVLRNVWVARRPPGYAFLEFDDERDALDAISALDRKNGWRVELSHKDKGGRGGGGGRRGGIEDSKCYECGELGHFARECRRGRGSVRRRSPSPRRRRSPDYGYARRSISPRGRRSPPRRRSVTPPRRGRSYSRSPPYRGSRRDSPRRRDSPYGRRSPYANGV</sequence>